<sequence length="257" mass="28095">MRHLRDLPDEEIIIASGSEILELVVNATMGDDHPEPPTPFGTPSLHDLYDLEVDVPEDDPNEKAVNDLFSDAALLAAEEASSPSSDSDSSLHTPRHDRGEKEIPGLKWEKMDLRCYEECLPPSDDEDEQAIQNAASHGVQAVSESFALDCPPLPGHGCKSCEFHRINTGDKAVLCALCYMRAYNHCVYSPVSDADDETPTTESTLSPPEIGTSPSDNIVRPVPVRATGRRAAVECLDDLLQGGDEPLDLCTRKRPRH</sequence>
<dbReference type="EMBL" id="M14918">
    <property type="protein sequence ID" value="AAA67091.1"/>
    <property type="molecule type" value="Genomic_DNA"/>
</dbReference>
<dbReference type="PIR" id="A25614">
    <property type="entry name" value="WMAD84"/>
</dbReference>
<dbReference type="GO" id="GO:0042025">
    <property type="term" value="C:host cell nucleus"/>
    <property type="evidence" value="ECO:0007669"/>
    <property type="project" value="UniProtKB-SubCell"/>
</dbReference>
<dbReference type="GO" id="GO:0008270">
    <property type="term" value="F:zinc ion binding"/>
    <property type="evidence" value="ECO:0007669"/>
    <property type="project" value="UniProtKB-KW"/>
</dbReference>
<dbReference type="GO" id="GO:0006355">
    <property type="term" value="P:regulation of DNA-templated transcription"/>
    <property type="evidence" value="ECO:0007669"/>
    <property type="project" value="InterPro"/>
</dbReference>
<dbReference type="GO" id="GO:0039645">
    <property type="term" value="P:symbiont-mediated perturbation of host cell cycle G1/S transition checkpoint"/>
    <property type="evidence" value="ECO:0007669"/>
    <property type="project" value="UniProtKB-KW"/>
</dbReference>
<dbReference type="GO" id="GO:0039648">
    <property type="term" value="P:symbiont-mediated perturbation of host ubiquitin-like protein modification"/>
    <property type="evidence" value="ECO:0007669"/>
    <property type="project" value="UniProtKB-KW"/>
</dbReference>
<dbReference type="GO" id="GO:0052170">
    <property type="term" value="P:symbiont-mediated suppression of host innate immune response"/>
    <property type="evidence" value="ECO:0007669"/>
    <property type="project" value="UniProtKB-KW"/>
</dbReference>
<dbReference type="GO" id="GO:0039563">
    <property type="term" value="P:symbiont-mediated suppression of host JAK-STAT cascade via inhibition of STAT1 activity"/>
    <property type="evidence" value="ECO:0007669"/>
    <property type="project" value="UniProtKB-KW"/>
</dbReference>
<dbReference type="GO" id="GO:0039502">
    <property type="term" value="P:symbiont-mediated suppression of host type I interferon-mediated signaling pathway"/>
    <property type="evidence" value="ECO:0007669"/>
    <property type="project" value="UniProtKB-KW"/>
</dbReference>
<dbReference type="InterPro" id="IPR014410">
    <property type="entry name" value="Aden_E1A"/>
</dbReference>
<dbReference type="Pfam" id="PF02703">
    <property type="entry name" value="Adeno_E1A"/>
    <property type="match status" value="1"/>
</dbReference>
<dbReference type="PIRSF" id="PIRSF003669">
    <property type="entry name" value="Aden_E1A"/>
    <property type="match status" value="1"/>
</dbReference>
<name>E1A_ADE04</name>
<comment type="function">
    <text evidence="3">Plays a role in viral genome replication by driving entry of quiescent cells into the cell cycle. Stimulation of progression from G1 to S phase allows the virus to efficiently use the cellular DNA replicating machinery to achieve viral genome replication. E1A protein has both transforming and trans-activating activities. Induces the disassembly of the E2F1 transcription factor from RB1 by direct competition for the same binding site on RB1, with subsequent transcriptional activation of E2F1-regulated S-phase genes and of the E2 region of the adenoviral genome. Release of E2F1 leads to the ARF-mediated inhibition of MDM2 and causes TP53/p53 to accumulate because it is not targeted for degradation by MDM2-mediated ubiquitination anymore. This increase in TP53, in turn, would arrest the cell proliferation and direct its death but this effect is counteracted by the viral protein E1B-55K. Inactivation of the ability of RB1 to arrest the cell cycle is critical for cellular transformation, uncontrolled cellular growth and proliferation induced by viral infection. Interaction with RBX1 and CUL1 inhibits ubiquitination of the proteins targeted by SCF(FBXW7) ubiquitin ligase complex, and may be linked to unregulated host cell proliferation. The tumorigenesis-restraining activity of E1A may be related to the disruption of the host CtBP-CtIP complex through the CtBP binding motif. Interaction with host TMEM173/STING impairs the ability of TMEM173/STING to sense cytosolic DNA and promote the production of type I interferon (IFN-alpha and IFN-beta). Promotes the sumoylation of host ZBED1/hDREF with SUMO1 (By similarity).</text>
</comment>
<comment type="subunit">
    <text evidence="2 3 6">Interacts with host UBE2I; this interaction interferes with polySUMOylation. Interacts with host RB1; this interaction induces the aberrant dissociation of RB1-E2F1 complex thereby disrupting the activity of RB1 and activating E2F1-regulated genes. Interacts with host ATF7; the interaction enhances ATF7-mediated viral transactivation activity which requires the zinc binding domains of both proteins. Isoform early E1A 32 kDa protein and isoform early E1A 26 kDa protein interact (via N-terminus) with CUL1 and E3 ubiquitin ligase RBX1; these interactions inhibit RBX1-CUL1-dependent elongation reaction of ubiquitin chains and attenuate ubiquitination of SCF(FBXW7) target proteins. Interacts (via PXLXP motif) with host ZMYND11/BS69 (via MYND-type zinc finger); this interaction inhibits E1A mediated transactivation. Interacts with host EP300; this interaction stimulates the acetylation of RB1 by recruiting EP300 and RB1 into a multimeric-protein complex. Interacts with host CTBP1 and CTBP2; this interaction seems to potentiate viral replication. Interacts with host DCAF7. Interacts with host DYRK1A. Interacts with host KPNA4; this interaction allows E1A import into the host nucleus. Interacts with host EP400; this interaction stabilizes MYC. Interacts with host TBP protein; this interaction probably disrupts the TBP-TATA complex. Interacts (via LXCXE motif) with host TMEM173/STING; this interaction impairs the ability of TMEM173/STING to sense cytosolic DNA and promote the production of type I interferon (IFN-alpha and IFN-beta). Interacts (via C-terminus) with host ZBED1/hDREF (via C-terminus); the interaction is direct (PubMed:25210186).</text>
</comment>
<comment type="subcellular location">
    <subcellularLocation>
        <location evidence="3">Host nucleus</location>
    </subcellularLocation>
</comment>
<comment type="similarity">
    <text evidence="7">Belongs to the adenoviridae E1A protein family.</text>
</comment>
<feature type="chain" id="PRO_0000221693" description="Early E1A protein">
    <location>
        <begin position="1"/>
        <end position="257"/>
    </location>
</feature>
<feature type="zinc finger region" evidence="2">
    <location>
        <begin position="158"/>
        <end position="178"/>
    </location>
</feature>
<feature type="region of interest" description="Disordered" evidence="5">
    <location>
        <begin position="26"/>
        <end position="46"/>
    </location>
</feature>
<feature type="region of interest" description="Interaction with RB1 in competition with E2F1" evidence="1">
    <location>
        <begin position="43"/>
        <end position="51"/>
    </location>
</feature>
<feature type="region of interest" description="Disordered" evidence="5">
    <location>
        <begin position="75"/>
        <end position="103"/>
    </location>
</feature>
<feature type="region of interest" description="Interaction with UBE2I" evidence="1">
    <location>
        <begin position="79"/>
        <end position="144"/>
    </location>
</feature>
<feature type="region of interest" description="Disordered" evidence="5">
    <location>
        <begin position="191"/>
        <end position="221"/>
    </location>
</feature>
<feature type="short sequence motif" description="PXLXP motif, interaction with host ZMYND11" evidence="1">
    <location>
        <begin position="104"/>
        <end position="108"/>
    </location>
</feature>
<feature type="short sequence motif" description="LXCXE motif, interaction with host RB1 and TMEM173/STING" evidence="4">
    <location>
        <begin position="113"/>
        <end position="117"/>
    </location>
</feature>
<feature type="short sequence motif" description="PXDLS motif, CTBP-binding" evidence="1">
    <location>
        <begin position="246"/>
        <end position="250"/>
    </location>
</feature>
<feature type="short sequence motif" description="Nuclear localization signal" evidence="4">
    <location>
        <begin position="252"/>
        <end position="257"/>
    </location>
</feature>
<feature type="compositionally biased region" description="Low complexity" evidence="5">
    <location>
        <begin position="75"/>
        <end position="91"/>
    </location>
</feature>
<feature type="compositionally biased region" description="Basic and acidic residues" evidence="5">
    <location>
        <begin position="94"/>
        <end position="103"/>
    </location>
</feature>
<feature type="compositionally biased region" description="Low complexity" evidence="5">
    <location>
        <begin position="200"/>
        <end position="209"/>
    </location>
</feature>
<evidence type="ECO:0000250" key="1"/>
<evidence type="ECO:0000250" key="2">
    <source>
        <dbReference type="UniProtKB" id="P03254"/>
    </source>
</evidence>
<evidence type="ECO:0000250" key="3">
    <source>
        <dbReference type="UniProtKB" id="P03255"/>
    </source>
</evidence>
<evidence type="ECO:0000255" key="4"/>
<evidence type="ECO:0000256" key="5">
    <source>
        <dbReference type="SAM" id="MobiDB-lite"/>
    </source>
</evidence>
<evidence type="ECO:0000269" key="6">
    <source>
    </source>
</evidence>
<evidence type="ECO:0000305" key="7"/>
<reference key="1">
    <citation type="journal article" date="1986" name="Virology">
        <title>Sequence analysis in the E1 region of adenovirus type 4 DNA.</title>
        <authorList>
            <person name="Tokunaga O."/>
            <person name="Yaegashi T."/>
            <person name="Lowe J."/>
            <person name="Dobbs L."/>
            <person name="Padmanabhan R."/>
        </authorList>
    </citation>
    <scope>NUCLEOTIDE SEQUENCE [GENOMIC DNA]</scope>
</reference>
<reference key="2">
    <citation type="journal article" date="2014" name="J. Virol.">
        <title>Adenovirus E1A targets the DREF nuclear factor to regulate virus gene expression, DNA replication, and growth.</title>
        <authorList>
            <person name="Radko S."/>
            <person name="Koleva M."/>
            <person name="James K.M."/>
            <person name="Jung R."/>
            <person name="Mymryk J.S."/>
            <person name="Pelka P."/>
        </authorList>
    </citation>
    <scope>INTERACTION WITH HUMAN ZBED1</scope>
</reference>
<proteinExistence type="evidence at protein level"/>
<accession>P10407</accession>
<keyword id="KW-0010">Activator</keyword>
<keyword id="KW-0244">Early protein</keyword>
<keyword id="KW-1078">G1/S host cell cycle checkpoint dysregulation by virus</keyword>
<keyword id="KW-1048">Host nucleus</keyword>
<keyword id="KW-0945">Host-virus interaction</keyword>
<keyword id="KW-1090">Inhibition of host innate immune response by virus</keyword>
<keyword id="KW-1114">Inhibition of host interferon signaling pathway by virus</keyword>
<keyword id="KW-1105">Inhibition of host STAT1 by virus</keyword>
<keyword id="KW-0922">Interferon antiviral system evasion</keyword>
<keyword id="KW-0479">Metal-binding</keyword>
<keyword id="KW-1121">Modulation of host cell cycle by virus</keyword>
<keyword id="KW-1123">Modulation of host E3 ubiquitin ligases by virus</keyword>
<keyword id="KW-1130">Modulation of host ubiquitin pathway by virus</keyword>
<keyword id="KW-0553">Oncogene</keyword>
<keyword id="KW-0804">Transcription</keyword>
<keyword id="KW-0805">Transcription regulation</keyword>
<keyword id="KW-0899">Viral immunoevasion</keyword>
<keyword id="KW-0862">Zinc</keyword>
<keyword id="KW-0863">Zinc-finger</keyword>
<organism>
    <name type="scientific">Human adenovirus E serotype 4</name>
    <name type="common">HAdV-4</name>
    <name type="synonym">Human adenovirus 4</name>
    <dbReference type="NCBI Taxonomy" id="28280"/>
    <lineage>
        <taxon>Viruses</taxon>
        <taxon>Varidnaviria</taxon>
        <taxon>Bamfordvirae</taxon>
        <taxon>Preplasmiviricota</taxon>
        <taxon>Tectiliviricetes</taxon>
        <taxon>Rowavirales</taxon>
        <taxon>Adenoviridae</taxon>
        <taxon>Mastadenovirus</taxon>
        <taxon>Human mastadenovirus E</taxon>
    </lineage>
</organism>
<protein>
    <recommendedName>
        <fullName>Early E1A protein</fullName>
    </recommendedName>
    <alternativeName>
        <fullName>Early E1A 28 kDa protein</fullName>
    </alternativeName>
</protein>
<organismHost>
    <name type="scientific">Homo sapiens</name>
    <name type="common">Human</name>
    <dbReference type="NCBI Taxonomy" id="9606"/>
</organismHost>